<comment type="function">
    <text evidence="1">Catalyzes the NAD-dependent oxidative cleavage of spermidine and the subsequent transfer of the butylamine moiety of spermidine to the epsilon-amino group of a specific lysine residue of the eIF-5A precursor protein to form the intermediate deoxyhypusine residue.</text>
</comment>
<comment type="catalytic activity">
    <reaction evidence="1">
        <text>[eIF5A protein]-L-lysine + spermidine = [eIF5A protein]-deoxyhypusine + propane-1,3-diamine</text>
        <dbReference type="Rhea" id="RHEA:33299"/>
        <dbReference type="Rhea" id="RHEA-COMP:10143"/>
        <dbReference type="Rhea" id="RHEA-COMP:10144"/>
        <dbReference type="ChEBI" id="CHEBI:29969"/>
        <dbReference type="ChEBI" id="CHEBI:57484"/>
        <dbReference type="ChEBI" id="CHEBI:57834"/>
        <dbReference type="ChEBI" id="CHEBI:82657"/>
        <dbReference type="EC" id="2.5.1.46"/>
    </reaction>
</comment>
<comment type="cofactor">
    <cofactor evidence="1">
        <name>NAD(+)</name>
        <dbReference type="ChEBI" id="CHEBI:57540"/>
    </cofactor>
</comment>
<comment type="pathway">
    <text evidence="1">Protein modification; eIF5A hypusination.</text>
</comment>
<comment type="similarity">
    <text evidence="1">Belongs to the deoxyhypusine synthase family.</text>
</comment>
<feature type="chain" id="PRO_1000096914" description="Probable deoxyhypusine synthase">
    <location>
        <begin position="1"/>
        <end position="330"/>
    </location>
</feature>
<feature type="region of interest" description="Disordered" evidence="2">
    <location>
        <begin position="1"/>
        <end position="25"/>
    </location>
</feature>
<feature type="active site" description="Nucleophile" evidence="1">
    <location>
        <position position="298"/>
    </location>
</feature>
<evidence type="ECO:0000255" key="1">
    <source>
        <dbReference type="HAMAP-Rule" id="MF_00153"/>
    </source>
</evidence>
<evidence type="ECO:0000256" key="2">
    <source>
        <dbReference type="SAM" id="MobiDB-lite"/>
    </source>
</evidence>
<accession>B0R5L2</accession>
<keyword id="KW-0386">Hypusine biosynthesis</keyword>
<keyword id="KW-0520">NAD</keyword>
<keyword id="KW-0808">Transferase</keyword>
<organism>
    <name type="scientific">Halobacterium salinarum (strain ATCC 29341 / DSM 671 / R1)</name>
    <dbReference type="NCBI Taxonomy" id="478009"/>
    <lineage>
        <taxon>Archaea</taxon>
        <taxon>Methanobacteriati</taxon>
        <taxon>Methanobacteriota</taxon>
        <taxon>Stenosarchaea group</taxon>
        <taxon>Halobacteria</taxon>
        <taxon>Halobacteriales</taxon>
        <taxon>Halobacteriaceae</taxon>
        <taxon>Halobacterium</taxon>
        <taxon>Halobacterium salinarum NRC-34001</taxon>
    </lineage>
</organism>
<reference key="1">
    <citation type="journal article" date="2008" name="Genomics">
        <title>Evolution in the laboratory: the genome of Halobacterium salinarum strain R1 compared to that of strain NRC-1.</title>
        <authorList>
            <person name="Pfeiffer F."/>
            <person name="Schuster S.C."/>
            <person name="Broicher A."/>
            <person name="Falb M."/>
            <person name="Palm P."/>
            <person name="Rodewald K."/>
            <person name="Ruepp A."/>
            <person name="Soppa J."/>
            <person name="Tittor J."/>
            <person name="Oesterhelt D."/>
        </authorList>
    </citation>
    <scope>NUCLEOTIDE SEQUENCE [LARGE SCALE GENOMIC DNA]</scope>
    <source>
        <strain>ATCC 29341 / DSM 671 / R1</strain>
    </source>
</reference>
<gene>
    <name evidence="1" type="primary">dys</name>
    <name type="ordered locus">OE_3059F</name>
</gene>
<proteinExistence type="inferred from homology"/>
<dbReference type="EC" id="2.5.1.46" evidence="1"/>
<dbReference type="EMBL" id="AM774415">
    <property type="protein sequence ID" value="CAP14029.1"/>
    <property type="molecule type" value="Genomic_DNA"/>
</dbReference>
<dbReference type="RefSeq" id="WP_010903042.1">
    <property type="nucleotide sequence ID" value="NC_010364.1"/>
</dbReference>
<dbReference type="SMR" id="B0R5L2"/>
<dbReference type="EnsemblBacteria" id="CAP14029">
    <property type="protein sequence ID" value="CAP14029"/>
    <property type="gene ID" value="OE_3059F"/>
</dbReference>
<dbReference type="KEGG" id="hsl:OE_3059F"/>
<dbReference type="HOGENOM" id="CLU_039781_0_0_2"/>
<dbReference type="PhylomeDB" id="B0R5L2"/>
<dbReference type="UniPathway" id="UPA00354"/>
<dbReference type="Proteomes" id="UP000001321">
    <property type="component" value="Chromosome"/>
</dbReference>
<dbReference type="GO" id="GO:0005737">
    <property type="term" value="C:cytoplasm"/>
    <property type="evidence" value="ECO:0007669"/>
    <property type="project" value="TreeGrafter"/>
</dbReference>
<dbReference type="GO" id="GO:0034038">
    <property type="term" value="F:deoxyhypusine synthase activity"/>
    <property type="evidence" value="ECO:0007669"/>
    <property type="project" value="UniProtKB-UniRule"/>
</dbReference>
<dbReference type="FunFam" id="3.40.910.10:FF:000010">
    <property type="entry name" value="Deoxyhypusine synthase"/>
    <property type="match status" value="1"/>
</dbReference>
<dbReference type="Gene3D" id="3.40.910.10">
    <property type="entry name" value="Deoxyhypusine synthase"/>
    <property type="match status" value="1"/>
</dbReference>
<dbReference type="HAMAP" id="MF_00153">
    <property type="entry name" value="DHS"/>
    <property type="match status" value="1"/>
</dbReference>
<dbReference type="InterPro" id="IPR022899">
    <property type="entry name" value="Deoxyhypus_synthase_arc"/>
</dbReference>
<dbReference type="InterPro" id="IPR002773">
    <property type="entry name" value="Deoxyhypusine_synthase"/>
</dbReference>
<dbReference type="InterPro" id="IPR036982">
    <property type="entry name" value="Deoxyhypusine_synthase_sf"/>
</dbReference>
<dbReference type="InterPro" id="IPR029035">
    <property type="entry name" value="DHS-like_NAD/FAD-binding_dom"/>
</dbReference>
<dbReference type="NCBIfam" id="TIGR00321">
    <property type="entry name" value="dhys"/>
    <property type="match status" value="1"/>
</dbReference>
<dbReference type="NCBIfam" id="NF003052">
    <property type="entry name" value="PRK03971.1"/>
    <property type="match status" value="1"/>
</dbReference>
<dbReference type="PANTHER" id="PTHR11703">
    <property type="entry name" value="DEOXYHYPUSINE SYNTHASE"/>
    <property type="match status" value="1"/>
</dbReference>
<dbReference type="PANTHER" id="PTHR11703:SF0">
    <property type="entry name" value="DEOXYHYPUSINE SYNTHASE"/>
    <property type="match status" value="1"/>
</dbReference>
<dbReference type="Pfam" id="PF01916">
    <property type="entry name" value="DS"/>
    <property type="match status" value="1"/>
</dbReference>
<dbReference type="SUPFAM" id="SSF52467">
    <property type="entry name" value="DHS-like NAD/FAD-binding domain"/>
    <property type="match status" value="1"/>
</dbReference>
<sequence>MTGDDADETHENVVPGSDEDLDTPDVRGYDFSGEFDFFELLDSYATTGFQASHLADAVDITREMREDDATIYLTLTSNIVSSGLREVVAHLVRENYVDVIITTSGSLTEDIIKTAKPFKMGEWDVDEAALREEGINRLGNIFVPSDRYVWLEEYLYDFFEEFFADQKVRTPTAFARELGATLDDEDSILKNAADNDIPVFCPALTDAEIGNFLYYYRQGYDSEVGIEILDDYDALIEEGLLADTTGLICVGAGVPKHHAIMTNLFRGGADYAVYISTGMEGDGSLSGAPPEEAVSWGKIKDEDAEPNYALIEAEATLVFPLLVAGAFENP</sequence>
<name>DHYS_HALS3</name>
<protein>
    <recommendedName>
        <fullName evidence="1">Probable deoxyhypusine synthase</fullName>
        <shortName evidence="1">DHS</shortName>
        <ecNumber evidence="1">2.5.1.46</ecNumber>
    </recommendedName>
</protein>